<name>THIG_RHOP5</name>
<organism>
    <name type="scientific">Rhodopseudomonas palustris (strain BisA53)</name>
    <dbReference type="NCBI Taxonomy" id="316055"/>
    <lineage>
        <taxon>Bacteria</taxon>
        <taxon>Pseudomonadati</taxon>
        <taxon>Pseudomonadota</taxon>
        <taxon>Alphaproteobacteria</taxon>
        <taxon>Hyphomicrobiales</taxon>
        <taxon>Nitrobacteraceae</taxon>
        <taxon>Rhodopseudomonas</taxon>
    </lineage>
</organism>
<gene>
    <name evidence="1" type="primary">thiG</name>
    <name type="ordered locus">RPE_2071</name>
</gene>
<sequence length="260" mass="27687">MVKFYDKEFGSRLLIGSALYPSASIMQDSIRDSGAEIVTVSLRRETAGGKVGDVFWSLIQKLGVTVLPNTAGCRSVREAVTTAKMARELFATSWIKLEVIADNDTLQPDVVGLVEAATILIKDGFEVFPYCTEDLSVAQRLVDAGCQVIMPWAAPIGSARGIVNRDALKLLRDRLPDITLVVDAGLGAPSHAAEAMELGFDAVLLNTAIAKAEHPAVMAAAFKLAIEGGRLGYEAGLMGPRDFASPSTPVIGTPFWHAVS</sequence>
<feature type="chain" id="PRO_1000026036" description="Thiazole synthase">
    <location>
        <begin position="1"/>
        <end position="260"/>
    </location>
</feature>
<feature type="active site" description="Schiff-base intermediate with DXP" evidence="1">
    <location>
        <position position="96"/>
    </location>
</feature>
<feature type="binding site" evidence="1">
    <location>
        <position position="157"/>
    </location>
    <ligand>
        <name>1-deoxy-D-xylulose 5-phosphate</name>
        <dbReference type="ChEBI" id="CHEBI:57792"/>
    </ligand>
</feature>
<feature type="binding site" evidence="1">
    <location>
        <begin position="184"/>
        <end position="185"/>
    </location>
    <ligand>
        <name>1-deoxy-D-xylulose 5-phosphate</name>
        <dbReference type="ChEBI" id="CHEBI:57792"/>
    </ligand>
</feature>
<feature type="binding site" evidence="1">
    <location>
        <begin position="206"/>
        <end position="207"/>
    </location>
    <ligand>
        <name>1-deoxy-D-xylulose 5-phosphate</name>
        <dbReference type="ChEBI" id="CHEBI:57792"/>
    </ligand>
</feature>
<accession>Q07PW9</accession>
<evidence type="ECO:0000255" key="1">
    <source>
        <dbReference type="HAMAP-Rule" id="MF_00443"/>
    </source>
</evidence>
<reference key="1">
    <citation type="submission" date="2006-09" db="EMBL/GenBank/DDBJ databases">
        <title>Complete sequence of Rhodopseudomonas palustris BisA53.</title>
        <authorList>
            <consortium name="US DOE Joint Genome Institute"/>
            <person name="Copeland A."/>
            <person name="Lucas S."/>
            <person name="Lapidus A."/>
            <person name="Barry K."/>
            <person name="Detter J.C."/>
            <person name="Glavina del Rio T."/>
            <person name="Hammon N."/>
            <person name="Israni S."/>
            <person name="Dalin E."/>
            <person name="Tice H."/>
            <person name="Pitluck S."/>
            <person name="Chain P."/>
            <person name="Malfatti S."/>
            <person name="Shin M."/>
            <person name="Vergez L."/>
            <person name="Schmutz J."/>
            <person name="Larimer F."/>
            <person name="Land M."/>
            <person name="Hauser L."/>
            <person name="Pelletier D.A."/>
            <person name="Kyrpides N."/>
            <person name="Kim E."/>
            <person name="Harwood C.S."/>
            <person name="Oda Y."/>
            <person name="Richardson P."/>
        </authorList>
    </citation>
    <scope>NUCLEOTIDE SEQUENCE [LARGE SCALE GENOMIC DNA]</scope>
    <source>
        <strain>BisA53</strain>
    </source>
</reference>
<protein>
    <recommendedName>
        <fullName evidence="1">Thiazole synthase</fullName>
        <ecNumber evidence="1">2.8.1.10</ecNumber>
    </recommendedName>
</protein>
<keyword id="KW-0963">Cytoplasm</keyword>
<keyword id="KW-0704">Schiff base</keyword>
<keyword id="KW-0784">Thiamine biosynthesis</keyword>
<keyword id="KW-0808">Transferase</keyword>
<comment type="function">
    <text evidence="1">Catalyzes the rearrangement of 1-deoxy-D-xylulose 5-phosphate (DXP) to produce the thiazole phosphate moiety of thiamine. Sulfur is provided by the thiocarboxylate moiety of the carrier protein ThiS. In vitro, sulfur can be provided by H(2)S.</text>
</comment>
<comment type="catalytic activity">
    <reaction evidence="1">
        <text>[ThiS sulfur-carrier protein]-C-terminal-Gly-aminoethanethioate + 2-iminoacetate + 1-deoxy-D-xylulose 5-phosphate = [ThiS sulfur-carrier protein]-C-terminal Gly-Gly + 2-[(2R,5Z)-2-carboxy-4-methylthiazol-5(2H)-ylidene]ethyl phosphate + 2 H2O + H(+)</text>
        <dbReference type="Rhea" id="RHEA:26297"/>
        <dbReference type="Rhea" id="RHEA-COMP:12909"/>
        <dbReference type="Rhea" id="RHEA-COMP:19908"/>
        <dbReference type="ChEBI" id="CHEBI:15377"/>
        <dbReference type="ChEBI" id="CHEBI:15378"/>
        <dbReference type="ChEBI" id="CHEBI:57792"/>
        <dbReference type="ChEBI" id="CHEBI:62899"/>
        <dbReference type="ChEBI" id="CHEBI:77846"/>
        <dbReference type="ChEBI" id="CHEBI:90778"/>
        <dbReference type="ChEBI" id="CHEBI:232372"/>
        <dbReference type="EC" id="2.8.1.10"/>
    </reaction>
</comment>
<comment type="pathway">
    <text evidence="1">Cofactor biosynthesis; thiamine diphosphate biosynthesis.</text>
</comment>
<comment type="subunit">
    <text evidence="1">Homotetramer. Forms heterodimers with either ThiH or ThiS.</text>
</comment>
<comment type="subcellular location">
    <subcellularLocation>
        <location evidence="1">Cytoplasm</location>
    </subcellularLocation>
</comment>
<comment type="similarity">
    <text evidence="1">Belongs to the ThiG family.</text>
</comment>
<proteinExistence type="inferred from homology"/>
<dbReference type="EC" id="2.8.1.10" evidence="1"/>
<dbReference type="EMBL" id="CP000463">
    <property type="protein sequence ID" value="ABJ06015.1"/>
    <property type="molecule type" value="Genomic_DNA"/>
</dbReference>
<dbReference type="SMR" id="Q07PW9"/>
<dbReference type="STRING" id="316055.RPE_2071"/>
<dbReference type="KEGG" id="rpe:RPE_2071"/>
<dbReference type="eggNOG" id="COG2022">
    <property type="taxonomic scope" value="Bacteria"/>
</dbReference>
<dbReference type="HOGENOM" id="CLU_062233_1_0_5"/>
<dbReference type="OrthoDB" id="9805935at2"/>
<dbReference type="UniPathway" id="UPA00060"/>
<dbReference type="GO" id="GO:0005737">
    <property type="term" value="C:cytoplasm"/>
    <property type="evidence" value="ECO:0007669"/>
    <property type="project" value="UniProtKB-SubCell"/>
</dbReference>
<dbReference type="GO" id="GO:1990107">
    <property type="term" value="F:thiazole synthase activity"/>
    <property type="evidence" value="ECO:0007669"/>
    <property type="project" value="UniProtKB-EC"/>
</dbReference>
<dbReference type="GO" id="GO:0009229">
    <property type="term" value="P:thiamine diphosphate biosynthetic process"/>
    <property type="evidence" value="ECO:0007669"/>
    <property type="project" value="UniProtKB-UniRule"/>
</dbReference>
<dbReference type="CDD" id="cd04728">
    <property type="entry name" value="ThiG"/>
    <property type="match status" value="1"/>
</dbReference>
<dbReference type="Gene3D" id="3.20.20.70">
    <property type="entry name" value="Aldolase class I"/>
    <property type="match status" value="1"/>
</dbReference>
<dbReference type="HAMAP" id="MF_00443">
    <property type="entry name" value="ThiG"/>
    <property type="match status" value="1"/>
</dbReference>
<dbReference type="InterPro" id="IPR013785">
    <property type="entry name" value="Aldolase_TIM"/>
</dbReference>
<dbReference type="InterPro" id="IPR033983">
    <property type="entry name" value="Thiazole_synthase_ThiG"/>
</dbReference>
<dbReference type="InterPro" id="IPR008867">
    <property type="entry name" value="ThiG"/>
</dbReference>
<dbReference type="PANTHER" id="PTHR34266">
    <property type="entry name" value="THIAZOLE SYNTHASE"/>
    <property type="match status" value="1"/>
</dbReference>
<dbReference type="PANTHER" id="PTHR34266:SF2">
    <property type="entry name" value="THIAZOLE SYNTHASE"/>
    <property type="match status" value="1"/>
</dbReference>
<dbReference type="Pfam" id="PF05690">
    <property type="entry name" value="ThiG"/>
    <property type="match status" value="1"/>
</dbReference>
<dbReference type="SUPFAM" id="SSF110399">
    <property type="entry name" value="ThiG-like"/>
    <property type="match status" value="1"/>
</dbReference>